<reference key="1">
    <citation type="submission" date="2009-02" db="EMBL/GenBank/DDBJ databases">
        <title>Genome sequence of Bacillus cereus 03BB102.</title>
        <authorList>
            <person name="Dodson R.J."/>
            <person name="Jackson P."/>
            <person name="Munk A.C."/>
            <person name="Brettin T."/>
            <person name="Bruce D."/>
            <person name="Detter C."/>
            <person name="Tapia R."/>
            <person name="Han C."/>
            <person name="Sutton G."/>
            <person name="Sims D."/>
        </authorList>
    </citation>
    <scope>NUCLEOTIDE SEQUENCE [LARGE SCALE GENOMIC DNA]</scope>
    <source>
        <strain>03BB102</strain>
    </source>
</reference>
<comment type="function">
    <text evidence="1">Involved in the biosynthesis of isopentenyl diphosphate (IPP) and dimethylallyl diphosphate (DMAPP), two major building blocks of isoprenoid compounds. Catalyzes the conversion of 4-diphosphocytidyl-2-C-methyl-D-erythritol 2-phosphate (CDP-ME2P) to 2-C-methyl-D-erythritol 2,4-cyclodiphosphate (ME-CPP) with a corresponding release of cytidine 5-monophosphate (CMP).</text>
</comment>
<comment type="catalytic activity">
    <reaction evidence="1">
        <text>4-CDP-2-C-methyl-D-erythritol 2-phosphate = 2-C-methyl-D-erythritol 2,4-cyclic diphosphate + CMP</text>
        <dbReference type="Rhea" id="RHEA:23864"/>
        <dbReference type="ChEBI" id="CHEBI:57919"/>
        <dbReference type="ChEBI" id="CHEBI:58483"/>
        <dbReference type="ChEBI" id="CHEBI:60377"/>
        <dbReference type="EC" id="4.6.1.12"/>
    </reaction>
</comment>
<comment type="cofactor">
    <cofactor evidence="1">
        <name>a divalent metal cation</name>
        <dbReference type="ChEBI" id="CHEBI:60240"/>
    </cofactor>
    <text evidence="1">Binds 1 divalent metal cation per subunit.</text>
</comment>
<comment type="pathway">
    <text evidence="1">Isoprenoid biosynthesis; isopentenyl diphosphate biosynthesis via DXP pathway; isopentenyl diphosphate from 1-deoxy-D-xylulose 5-phosphate: step 4/6.</text>
</comment>
<comment type="subunit">
    <text evidence="1">Homotrimer.</text>
</comment>
<comment type="similarity">
    <text evidence="1">Belongs to the IspF family.</text>
</comment>
<protein>
    <recommendedName>
        <fullName evidence="1">2-C-methyl-D-erythritol 2,4-cyclodiphosphate synthase</fullName>
        <shortName evidence="1">MECDP-synthase</shortName>
        <shortName evidence="1">MECPP-synthase</shortName>
        <shortName evidence="1">MECPS</shortName>
        <ecNumber evidence="1">4.6.1.12</ecNumber>
    </recommendedName>
</protein>
<sequence>MFRIGQGFDVHEFAEGRPLIIGGITIPHEKGLIGHSDADVLLHTIADACLGAIAAGDIGKHFPDTDPAFKDADSAVLLQKVWEFVREQGYELGNLDCTIIAQKPKMAPHIESMRKRISELLETSIDNINVKATTTEKLGFTGREEGIASQAVVLLQKK</sequence>
<keyword id="KW-0414">Isoprene biosynthesis</keyword>
<keyword id="KW-0456">Lyase</keyword>
<keyword id="KW-0479">Metal-binding</keyword>
<dbReference type="EC" id="4.6.1.12" evidence="1"/>
<dbReference type="EMBL" id="CP001407">
    <property type="protein sequence ID" value="ACO29132.1"/>
    <property type="molecule type" value="Genomic_DNA"/>
</dbReference>
<dbReference type="RefSeq" id="WP_000488386.1">
    <property type="nucleotide sequence ID" value="NZ_CP009318.1"/>
</dbReference>
<dbReference type="SMR" id="C1ET16"/>
<dbReference type="GeneID" id="93010967"/>
<dbReference type="KEGG" id="bcx:BCA_0115"/>
<dbReference type="PATRIC" id="fig|572264.18.peg.151"/>
<dbReference type="UniPathway" id="UPA00056">
    <property type="reaction ID" value="UER00095"/>
</dbReference>
<dbReference type="Proteomes" id="UP000002210">
    <property type="component" value="Chromosome"/>
</dbReference>
<dbReference type="GO" id="GO:0008685">
    <property type="term" value="F:2-C-methyl-D-erythritol 2,4-cyclodiphosphate synthase activity"/>
    <property type="evidence" value="ECO:0007669"/>
    <property type="project" value="UniProtKB-UniRule"/>
</dbReference>
<dbReference type="GO" id="GO:0046872">
    <property type="term" value="F:metal ion binding"/>
    <property type="evidence" value="ECO:0007669"/>
    <property type="project" value="UniProtKB-KW"/>
</dbReference>
<dbReference type="GO" id="GO:0019288">
    <property type="term" value="P:isopentenyl diphosphate biosynthetic process, methylerythritol 4-phosphate pathway"/>
    <property type="evidence" value="ECO:0007669"/>
    <property type="project" value="UniProtKB-UniRule"/>
</dbReference>
<dbReference type="GO" id="GO:0016114">
    <property type="term" value="P:terpenoid biosynthetic process"/>
    <property type="evidence" value="ECO:0007669"/>
    <property type="project" value="InterPro"/>
</dbReference>
<dbReference type="CDD" id="cd00554">
    <property type="entry name" value="MECDP_synthase"/>
    <property type="match status" value="1"/>
</dbReference>
<dbReference type="FunFam" id="3.30.1330.50:FF:000001">
    <property type="entry name" value="2-C-methyl-D-erythritol 2,4-cyclodiphosphate synthase"/>
    <property type="match status" value="1"/>
</dbReference>
<dbReference type="Gene3D" id="3.30.1330.50">
    <property type="entry name" value="2-C-methyl-D-erythritol 2,4-cyclodiphosphate synthase"/>
    <property type="match status" value="1"/>
</dbReference>
<dbReference type="HAMAP" id="MF_00107">
    <property type="entry name" value="IspF"/>
    <property type="match status" value="1"/>
</dbReference>
<dbReference type="InterPro" id="IPR003526">
    <property type="entry name" value="MECDP_synthase"/>
</dbReference>
<dbReference type="InterPro" id="IPR020555">
    <property type="entry name" value="MECDP_synthase_CS"/>
</dbReference>
<dbReference type="InterPro" id="IPR036571">
    <property type="entry name" value="MECDP_synthase_sf"/>
</dbReference>
<dbReference type="NCBIfam" id="TIGR00151">
    <property type="entry name" value="ispF"/>
    <property type="match status" value="1"/>
</dbReference>
<dbReference type="PANTHER" id="PTHR43181">
    <property type="entry name" value="2-C-METHYL-D-ERYTHRITOL 2,4-CYCLODIPHOSPHATE SYNTHASE, CHLOROPLASTIC"/>
    <property type="match status" value="1"/>
</dbReference>
<dbReference type="PANTHER" id="PTHR43181:SF1">
    <property type="entry name" value="2-C-METHYL-D-ERYTHRITOL 2,4-CYCLODIPHOSPHATE SYNTHASE, CHLOROPLASTIC"/>
    <property type="match status" value="1"/>
</dbReference>
<dbReference type="Pfam" id="PF02542">
    <property type="entry name" value="YgbB"/>
    <property type="match status" value="1"/>
</dbReference>
<dbReference type="SUPFAM" id="SSF69765">
    <property type="entry name" value="IpsF-like"/>
    <property type="match status" value="1"/>
</dbReference>
<dbReference type="PROSITE" id="PS01350">
    <property type="entry name" value="ISPF"/>
    <property type="match status" value="1"/>
</dbReference>
<feature type="chain" id="PRO_1000118993" description="2-C-methyl-D-erythritol 2,4-cyclodiphosphate synthase">
    <location>
        <begin position="1"/>
        <end position="158"/>
    </location>
</feature>
<feature type="binding site" evidence="1">
    <location>
        <begin position="9"/>
        <end position="11"/>
    </location>
    <ligand>
        <name>4-CDP-2-C-methyl-D-erythritol 2-phosphate</name>
        <dbReference type="ChEBI" id="CHEBI:57919"/>
    </ligand>
</feature>
<feature type="binding site" evidence="1">
    <location>
        <position position="9"/>
    </location>
    <ligand>
        <name>a divalent metal cation</name>
        <dbReference type="ChEBI" id="CHEBI:60240"/>
    </ligand>
</feature>
<feature type="binding site" evidence="1">
    <location>
        <position position="11"/>
    </location>
    <ligand>
        <name>a divalent metal cation</name>
        <dbReference type="ChEBI" id="CHEBI:60240"/>
    </ligand>
</feature>
<feature type="binding site" evidence="1">
    <location>
        <begin position="35"/>
        <end position="36"/>
    </location>
    <ligand>
        <name>4-CDP-2-C-methyl-D-erythritol 2-phosphate</name>
        <dbReference type="ChEBI" id="CHEBI:57919"/>
    </ligand>
</feature>
<feature type="binding site" evidence="1">
    <location>
        <position position="43"/>
    </location>
    <ligand>
        <name>a divalent metal cation</name>
        <dbReference type="ChEBI" id="CHEBI:60240"/>
    </ligand>
</feature>
<feature type="binding site" evidence="1">
    <location>
        <begin position="57"/>
        <end position="59"/>
    </location>
    <ligand>
        <name>4-CDP-2-C-methyl-D-erythritol 2-phosphate</name>
        <dbReference type="ChEBI" id="CHEBI:57919"/>
    </ligand>
</feature>
<feature type="binding site" evidence="1">
    <location>
        <begin position="62"/>
        <end position="66"/>
    </location>
    <ligand>
        <name>4-CDP-2-C-methyl-D-erythritol 2-phosphate</name>
        <dbReference type="ChEBI" id="CHEBI:57919"/>
    </ligand>
</feature>
<feature type="binding site" evidence="1">
    <location>
        <begin position="101"/>
        <end position="107"/>
    </location>
    <ligand>
        <name>4-CDP-2-C-methyl-D-erythritol 2-phosphate</name>
        <dbReference type="ChEBI" id="CHEBI:57919"/>
    </ligand>
</feature>
<feature type="binding site" evidence="1">
    <location>
        <begin position="133"/>
        <end position="136"/>
    </location>
    <ligand>
        <name>4-CDP-2-C-methyl-D-erythritol 2-phosphate</name>
        <dbReference type="ChEBI" id="CHEBI:57919"/>
    </ligand>
</feature>
<feature type="binding site" evidence="1">
    <location>
        <position position="140"/>
    </location>
    <ligand>
        <name>4-CDP-2-C-methyl-D-erythritol 2-phosphate</name>
        <dbReference type="ChEBI" id="CHEBI:57919"/>
    </ligand>
</feature>
<feature type="binding site" evidence="1">
    <location>
        <position position="143"/>
    </location>
    <ligand>
        <name>4-CDP-2-C-methyl-D-erythritol 2-phosphate</name>
        <dbReference type="ChEBI" id="CHEBI:57919"/>
    </ligand>
</feature>
<feature type="site" description="Transition state stabilizer" evidence="1">
    <location>
        <position position="35"/>
    </location>
</feature>
<feature type="site" description="Transition state stabilizer" evidence="1">
    <location>
        <position position="134"/>
    </location>
</feature>
<accession>C1ET16</accession>
<evidence type="ECO:0000255" key="1">
    <source>
        <dbReference type="HAMAP-Rule" id="MF_00107"/>
    </source>
</evidence>
<proteinExistence type="inferred from homology"/>
<gene>
    <name evidence="1" type="primary">ispF</name>
    <name type="ordered locus">BCA_0115</name>
</gene>
<name>ISPF_BACC3</name>
<organism>
    <name type="scientific">Bacillus cereus (strain 03BB102)</name>
    <dbReference type="NCBI Taxonomy" id="572264"/>
    <lineage>
        <taxon>Bacteria</taxon>
        <taxon>Bacillati</taxon>
        <taxon>Bacillota</taxon>
        <taxon>Bacilli</taxon>
        <taxon>Bacillales</taxon>
        <taxon>Bacillaceae</taxon>
        <taxon>Bacillus</taxon>
        <taxon>Bacillus cereus group</taxon>
    </lineage>
</organism>